<comment type="function">
    <text evidence="1">DEAD-box RNA helicase-like protein required for pre-18S rRNA processing, specifically at sites A0, A1, and A2.</text>
</comment>
<comment type="subunit">
    <text evidence="1">Component of the ribosomal small subunit (SSU) processome composed of at least 40 protein subunits and snoRNA U3.</text>
</comment>
<comment type="subcellular location">
    <subcellularLocation>
        <location evidence="1">Nucleus</location>
        <location evidence="1">Nucleolus</location>
    </subcellularLocation>
</comment>
<comment type="similarity">
    <text evidence="3">Belongs to the UTP25 family.</text>
</comment>
<protein>
    <recommendedName>
        <fullName>U3 small nucleolar RNA-associated protein 25</fullName>
        <shortName>U3 snoRNA-associated protein 25</shortName>
    </recommendedName>
    <alternativeName>
        <fullName>U three protein 25</fullName>
    </alternativeName>
</protein>
<keyword id="KW-0539">Nucleus</keyword>
<keyword id="KW-1185">Reference proteome</keyword>
<keyword id="KW-0687">Ribonucleoprotein</keyword>
<keyword id="KW-0690">Ribosome biogenesis</keyword>
<keyword id="KW-0698">rRNA processing</keyword>
<sequence length="721" mass="81635">MAPPRGRAPRGRGKRSRGPVGRRDAFQASRVDDIESDDSSSGEDGPIDEHMEEGMAEEEAMDVGSSSDEEDEEKSGRPYNELLQLLNTSTDSKGPARKKRKVEHKNTETIEVVREDPVAEEDEEALGEDDLEQQEPSDEEDNGNQEDAGAQDSDDEDDNDPFDTHFTNPTEDELAKKIKAIGENKWKNAKKELPEGLRLVRAVPDTGDDASWLPPMKQISSVKLKRKLKEPASDKFPQISGQAQHIAPYIFGYQDVLYGARTPSNSAQMRDLLALHATNHVLKTRDRVLKNNTRLAKEQDSDLDVRDQGFTRPKVLYLLPTKQACVRAVESITRFFQPEQQENKKRLLDTFSAADDPSWESKPDDFRELFGGNDDDMFRLGLKFTRKTVKYFAQFYTSDIIMASPLGLRTIMDQADVKKRDHDFLSSIEVVIVDHADALLMQNWDHIDYIMKHLNLQPREAHGCDFSRVRTWYLDNNARYVRQMIMLTSFVTPEMNSVFSTHMHNTSGKVKATPIHAGAITELPLPVSVRQTFTRFDCLSPAKDPDARFKHFTTTILSSLVRDIASGRGKASAGGTLIFIPSYLDFVRVRNHFATSQQTTNVSFGAISEYTEQREASRARSYFMNGRQSVLLYTERLHHFRRYQLRGVKRIIMYGVPENPAFYSEIVGFLGLDPAALVEAAEGGVRALFSKWDALKLERIVGTQRVGNMMREKGGDTFTFM</sequence>
<gene>
    <name type="primary">utp25</name>
    <name type="ORF">An08g00870</name>
</gene>
<feature type="chain" id="PRO_0000408103" description="U3 small nucleolar RNA-associated protein 25">
    <location>
        <begin position="1"/>
        <end position="721"/>
    </location>
</feature>
<feature type="region of interest" description="Disordered" evidence="2">
    <location>
        <begin position="1"/>
        <end position="171"/>
    </location>
</feature>
<feature type="compositionally biased region" description="Basic residues" evidence="2">
    <location>
        <begin position="7"/>
        <end position="17"/>
    </location>
</feature>
<feature type="compositionally biased region" description="Basic and acidic residues" evidence="2">
    <location>
        <begin position="21"/>
        <end position="33"/>
    </location>
</feature>
<feature type="compositionally biased region" description="Acidic residues" evidence="2">
    <location>
        <begin position="54"/>
        <end position="73"/>
    </location>
</feature>
<feature type="compositionally biased region" description="Basic and acidic residues" evidence="2">
    <location>
        <begin position="104"/>
        <end position="117"/>
    </location>
</feature>
<feature type="compositionally biased region" description="Acidic residues" evidence="2">
    <location>
        <begin position="118"/>
        <end position="144"/>
    </location>
</feature>
<feature type="compositionally biased region" description="Acidic residues" evidence="2">
    <location>
        <begin position="152"/>
        <end position="161"/>
    </location>
</feature>
<evidence type="ECO:0000250" key="1"/>
<evidence type="ECO:0000256" key="2">
    <source>
        <dbReference type="SAM" id="MobiDB-lite"/>
    </source>
</evidence>
<evidence type="ECO:0000305" key="3"/>
<proteinExistence type="inferred from homology"/>
<name>UTP25_ASPNC</name>
<reference key="1">
    <citation type="journal article" date="2007" name="Nat. Biotechnol.">
        <title>Genome sequencing and analysis of the versatile cell factory Aspergillus niger CBS 513.88.</title>
        <authorList>
            <person name="Pel H.J."/>
            <person name="de Winde J.H."/>
            <person name="Archer D.B."/>
            <person name="Dyer P.S."/>
            <person name="Hofmann G."/>
            <person name="Schaap P.J."/>
            <person name="Turner G."/>
            <person name="de Vries R.P."/>
            <person name="Albang R."/>
            <person name="Albermann K."/>
            <person name="Andersen M.R."/>
            <person name="Bendtsen J.D."/>
            <person name="Benen J.A.E."/>
            <person name="van den Berg M."/>
            <person name="Breestraat S."/>
            <person name="Caddick M.X."/>
            <person name="Contreras R."/>
            <person name="Cornell M."/>
            <person name="Coutinho P.M."/>
            <person name="Danchin E.G.J."/>
            <person name="Debets A.J.M."/>
            <person name="Dekker P."/>
            <person name="van Dijck P.W.M."/>
            <person name="van Dijk A."/>
            <person name="Dijkhuizen L."/>
            <person name="Driessen A.J.M."/>
            <person name="d'Enfert C."/>
            <person name="Geysens S."/>
            <person name="Goosen C."/>
            <person name="Groot G.S.P."/>
            <person name="de Groot P.W.J."/>
            <person name="Guillemette T."/>
            <person name="Henrissat B."/>
            <person name="Herweijer M."/>
            <person name="van den Hombergh J.P.T.W."/>
            <person name="van den Hondel C.A.M.J.J."/>
            <person name="van der Heijden R.T.J.M."/>
            <person name="van der Kaaij R.M."/>
            <person name="Klis F.M."/>
            <person name="Kools H.J."/>
            <person name="Kubicek C.P."/>
            <person name="van Kuyk P.A."/>
            <person name="Lauber J."/>
            <person name="Lu X."/>
            <person name="van der Maarel M.J.E.C."/>
            <person name="Meulenberg R."/>
            <person name="Menke H."/>
            <person name="Mortimer M.A."/>
            <person name="Nielsen J."/>
            <person name="Oliver S.G."/>
            <person name="Olsthoorn M."/>
            <person name="Pal K."/>
            <person name="van Peij N.N.M.E."/>
            <person name="Ram A.F.J."/>
            <person name="Rinas U."/>
            <person name="Roubos J.A."/>
            <person name="Sagt C.M.J."/>
            <person name="Schmoll M."/>
            <person name="Sun J."/>
            <person name="Ussery D."/>
            <person name="Varga J."/>
            <person name="Vervecken W."/>
            <person name="van de Vondervoort P.J.J."/>
            <person name="Wedler H."/>
            <person name="Woesten H.A.B."/>
            <person name="Zeng A.-P."/>
            <person name="van Ooyen A.J.J."/>
            <person name="Visser J."/>
            <person name="Stam H."/>
        </authorList>
    </citation>
    <scope>NUCLEOTIDE SEQUENCE [LARGE SCALE GENOMIC DNA]</scope>
    <source>
        <strain>ATCC MYA-4892 / CBS 513.88 / FGSC A1513</strain>
    </source>
</reference>
<dbReference type="EMBL" id="AM270157">
    <property type="protein sequence ID" value="CAK45239.1"/>
    <property type="molecule type" value="Genomic_DNA"/>
</dbReference>
<dbReference type="RefSeq" id="XP_001392205.1">
    <property type="nucleotide sequence ID" value="XM_001392168.1"/>
</dbReference>
<dbReference type="SMR" id="A2QQ09"/>
<dbReference type="EnsemblFungi" id="CAK45239">
    <property type="protein sequence ID" value="CAK45239"/>
    <property type="gene ID" value="An08g00870"/>
</dbReference>
<dbReference type="GeneID" id="4982401"/>
<dbReference type="KEGG" id="ang:An08g00870"/>
<dbReference type="VEuPathDB" id="FungiDB:An08g00870"/>
<dbReference type="HOGENOM" id="CLU_018705_0_1_1"/>
<dbReference type="Proteomes" id="UP000006706">
    <property type="component" value="Chromosome 8R"/>
</dbReference>
<dbReference type="GO" id="GO:0005730">
    <property type="term" value="C:nucleolus"/>
    <property type="evidence" value="ECO:0007669"/>
    <property type="project" value="UniProtKB-SubCell"/>
</dbReference>
<dbReference type="GO" id="GO:0032040">
    <property type="term" value="C:small-subunit processome"/>
    <property type="evidence" value="ECO:0007669"/>
    <property type="project" value="EnsemblFungi"/>
</dbReference>
<dbReference type="GO" id="GO:0019843">
    <property type="term" value="F:rRNA binding"/>
    <property type="evidence" value="ECO:0007669"/>
    <property type="project" value="EnsemblFungi"/>
</dbReference>
<dbReference type="GO" id="GO:0034511">
    <property type="term" value="F:U3 snoRNA binding"/>
    <property type="evidence" value="ECO:0007669"/>
    <property type="project" value="EnsemblFungi"/>
</dbReference>
<dbReference type="GO" id="GO:0000462">
    <property type="term" value="P:maturation of SSU-rRNA from tricistronic rRNA transcript (SSU-rRNA, 5.8S rRNA, LSU-rRNA)"/>
    <property type="evidence" value="ECO:0007669"/>
    <property type="project" value="EnsemblFungi"/>
</dbReference>
<dbReference type="FunFam" id="3.40.50.300:FF:002356">
    <property type="entry name" value="U3 small nucleolar RNA-associated protein 25"/>
    <property type="match status" value="1"/>
</dbReference>
<dbReference type="Gene3D" id="3.40.50.300">
    <property type="entry name" value="P-loop containing nucleotide triphosphate hydrolases"/>
    <property type="match status" value="1"/>
</dbReference>
<dbReference type="InterPro" id="IPR027417">
    <property type="entry name" value="P-loop_NTPase"/>
</dbReference>
<dbReference type="InterPro" id="IPR010678">
    <property type="entry name" value="UTP25"/>
</dbReference>
<dbReference type="InterPro" id="IPR053939">
    <property type="entry name" value="UTP25_C"/>
</dbReference>
<dbReference type="InterPro" id="IPR053940">
    <property type="entry name" value="UTP25_NTPase-like"/>
</dbReference>
<dbReference type="PANTHER" id="PTHR12933">
    <property type="entry name" value="ORF PROTEIN-RELATED"/>
    <property type="match status" value="1"/>
</dbReference>
<dbReference type="PANTHER" id="PTHR12933:SF0">
    <property type="entry name" value="U3 SMALL NUCLEOLAR RNA-ASSOCIATED PROTEIN 25 HOMOLOG"/>
    <property type="match status" value="1"/>
</dbReference>
<dbReference type="Pfam" id="PF06862">
    <property type="entry name" value="Utp25_C"/>
    <property type="match status" value="1"/>
</dbReference>
<dbReference type="Pfam" id="PF22916">
    <property type="entry name" value="UTP25_NTPase-like"/>
    <property type="match status" value="1"/>
</dbReference>
<organism>
    <name type="scientific">Aspergillus niger (strain ATCC MYA-4892 / CBS 513.88 / FGSC A1513)</name>
    <dbReference type="NCBI Taxonomy" id="425011"/>
    <lineage>
        <taxon>Eukaryota</taxon>
        <taxon>Fungi</taxon>
        <taxon>Dikarya</taxon>
        <taxon>Ascomycota</taxon>
        <taxon>Pezizomycotina</taxon>
        <taxon>Eurotiomycetes</taxon>
        <taxon>Eurotiomycetidae</taxon>
        <taxon>Eurotiales</taxon>
        <taxon>Aspergillaceae</taxon>
        <taxon>Aspergillus</taxon>
        <taxon>Aspergillus subgen. Circumdati</taxon>
    </lineage>
</organism>
<accession>A2QQ09</accession>